<keyword id="KW-0456">Lyase</keyword>
<keyword id="KW-0659">Purine metabolism</keyword>
<sequence length="167" mass="18722">MRTLMIEPLTKEAFAPFGDVIETDGSDHFMINNGSTMRFHKLATVETAEPEDKAIISIFRADALDMPLTVRMLERHPLGSQAFIPLLGNPFLIVVAPVGDAPVSGLVRAFRSNGRQGVNYHRGVWHHPVLTIEKRDDFLVVDRSGSGNNCDEHYFTEEQMLILNPHQ</sequence>
<name>ALLA_PSEPW</name>
<feature type="chain" id="PRO_1000130419" description="Ureidoglycolate lyase">
    <location>
        <begin position="1"/>
        <end position="167"/>
    </location>
</feature>
<proteinExistence type="inferred from homology"/>
<gene>
    <name evidence="1" type="primary">allA</name>
    <name type="ordered locus">PputW619_3614</name>
</gene>
<dbReference type="EC" id="4.3.2.3" evidence="1"/>
<dbReference type="EMBL" id="CP000949">
    <property type="protein sequence ID" value="ACA74096.1"/>
    <property type="molecule type" value="Genomic_DNA"/>
</dbReference>
<dbReference type="SMR" id="B1JC20"/>
<dbReference type="STRING" id="390235.PputW619_3614"/>
<dbReference type="KEGG" id="ppw:PputW619_3614"/>
<dbReference type="eggNOG" id="COG3194">
    <property type="taxonomic scope" value="Bacteria"/>
</dbReference>
<dbReference type="HOGENOM" id="CLU_070848_1_0_6"/>
<dbReference type="OrthoDB" id="9804602at2"/>
<dbReference type="UniPathway" id="UPA00395"/>
<dbReference type="GO" id="GO:0004848">
    <property type="term" value="F:ureidoglycolate hydrolase activity"/>
    <property type="evidence" value="ECO:0007669"/>
    <property type="project" value="InterPro"/>
</dbReference>
<dbReference type="GO" id="GO:0050385">
    <property type="term" value="F:ureidoglycolate lyase activity"/>
    <property type="evidence" value="ECO:0007669"/>
    <property type="project" value="UniProtKB-UniRule"/>
</dbReference>
<dbReference type="GO" id="GO:0000256">
    <property type="term" value="P:allantoin catabolic process"/>
    <property type="evidence" value="ECO:0007669"/>
    <property type="project" value="UniProtKB-UniRule"/>
</dbReference>
<dbReference type="GO" id="GO:0006145">
    <property type="term" value="P:purine nucleobase catabolic process"/>
    <property type="evidence" value="ECO:0007669"/>
    <property type="project" value="UniProtKB-UniRule"/>
</dbReference>
<dbReference type="CDD" id="cd20298">
    <property type="entry name" value="cupin_UAH"/>
    <property type="match status" value="1"/>
</dbReference>
<dbReference type="Gene3D" id="2.60.120.480">
    <property type="entry name" value="Ureidoglycolate hydrolase"/>
    <property type="match status" value="1"/>
</dbReference>
<dbReference type="HAMAP" id="MF_00616">
    <property type="entry name" value="Ureidogly_lyase"/>
    <property type="match status" value="1"/>
</dbReference>
<dbReference type="InterPro" id="IPR011051">
    <property type="entry name" value="RmlC_Cupin_sf"/>
</dbReference>
<dbReference type="InterPro" id="IPR047233">
    <property type="entry name" value="UAH_cupin"/>
</dbReference>
<dbReference type="InterPro" id="IPR007247">
    <property type="entry name" value="Ureidogly_lyase"/>
</dbReference>
<dbReference type="InterPro" id="IPR023525">
    <property type="entry name" value="Ureidogly_lyase_bac"/>
</dbReference>
<dbReference type="InterPro" id="IPR024060">
    <property type="entry name" value="Ureidoglycolate_lyase_dom_sf"/>
</dbReference>
<dbReference type="NCBIfam" id="NF002949">
    <property type="entry name" value="PRK03606.1-2"/>
    <property type="match status" value="1"/>
</dbReference>
<dbReference type="NCBIfam" id="NF009932">
    <property type="entry name" value="PRK13395.1"/>
    <property type="match status" value="1"/>
</dbReference>
<dbReference type="PANTHER" id="PTHR21221">
    <property type="entry name" value="UREIDOGLYCOLATE HYDROLASE"/>
    <property type="match status" value="1"/>
</dbReference>
<dbReference type="PANTHER" id="PTHR21221:SF1">
    <property type="entry name" value="UREIDOGLYCOLATE LYASE"/>
    <property type="match status" value="1"/>
</dbReference>
<dbReference type="Pfam" id="PF04115">
    <property type="entry name" value="Ureidogly_lyase"/>
    <property type="match status" value="1"/>
</dbReference>
<dbReference type="PIRSF" id="PIRSF017306">
    <property type="entry name" value="Ureidogly_hydro"/>
    <property type="match status" value="1"/>
</dbReference>
<dbReference type="SUPFAM" id="SSF51182">
    <property type="entry name" value="RmlC-like cupins"/>
    <property type="match status" value="1"/>
</dbReference>
<evidence type="ECO:0000255" key="1">
    <source>
        <dbReference type="HAMAP-Rule" id="MF_00616"/>
    </source>
</evidence>
<protein>
    <recommendedName>
        <fullName evidence="1">Ureidoglycolate lyase</fullName>
        <ecNumber evidence="1">4.3.2.3</ecNumber>
    </recommendedName>
    <alternativeName>
        <fullName evidence="1">Ureidoglycolatase</fullName>
    </alternativeName>
</protein>
<organism>
    <name type="scientific">Pseudomonas putida (strain W619)</name>
    <dbReference type="NCBI Taxonomy" id="390235"/>
    <lineage>
        <taxon>Bacteria</taxon>
        <taxon>Pseudomonadati</taxon>
        <taxon>Pseudomonadota</taxon>
        <taxon>Gammaproteobacteria</taxon>
        <taxon>Pseudomonadales</taxon>
        <taxon>Pseudomonadaceae</taxon>
        <taxon>Pseudomonas</taxon>
    </lineage>
</organism>
<reference key="1">
    <citation type="submission" date="2008-02" db="EMBL/GenBank/DDBJ databases">
        <title>Complete sequence of Pseudomonas putida W619.</title>
        <authorList>
            <person name="Copeland A."/>
            <person name="Lucas S."/>
            <person name="Lapidus A."/>
            <person name="Barry K."/>
            <person name="Detter J.C."/>
            <person name="Glavina del Rio T."/>
            <person name="Dalin E."/>
            <person name="Tice H."/>
            <person name="Pitluck S."/>
            <person name="Chain P."/>
            <person name="Malfatti S."/>
            <person name="Shin M."/>
            <person name="Vergez L."/>
            <person name="Schmutz J."/>
            <person name="Larimer F."/>
            <person name="Land M."/>
            <person name="Hauser L."/>
            <person name="Kyrpides N."/>
            <person name="Kim E."/>
            <person name="Taghavi S."/>
            <person name="Vangronsveld D."/>
            <person name="van der Lelie D."/>
            <person name="Richardson P."/>
        </authorList>
    </citation>
    <scope>NUCLEOTIDE SEQUENCE [LARGE SCALE GENOMIC DNA]</scope>
    <source>
        <strain>W619</strain>
    </source>
</reference>
<comment type="function">
    <text evidence="1">Catalyzes the catabolism of the allantoin degradation intermediate (S)-ureidoglycolate, generating urea and glyoxylate. Involved in the utilization of allantoin as nitrogen source.</text>
</comment>
<comment type="catalytic activity">
    <reaction evidence="1">
        <text>(S)-ureidoglycolate = urea + glyoxylate</text>
        <dbReference type="Rhea" id="RHEA:11304"/>
        <dbReference type="ChEBI" id="CHEBI:16199"/>
        <dbReference type="ChEBI" id="CHEBI:36655"/>
        <dbReference type="ChEBI" id="CHEBI:57296"/>
        <dbReference type="EC" id="4.3.2.3"/>
    </reaction>
</comment>
<comment type="cofactor">
    <cofactor evidence="1">
        <name>Ni(2+)</name>
        <dbReference type="ChEBI" id="CHEBI:49786"/>
    </cofactor>
</comment>
<comment type="pathway">
    <text evidence="1">Nitrogen metabolism; (S)-allantoin degradation.</text>
</comment>
<comment type="subunit">
    <text evidence="1">Homodimer.</text>
</comment>
<comment type="similarity">
    <text evidence="1">Belongs to the ureidoglycolate lyase family.</text>
</comment>
<accession>B1JC20</accession>